<proteinExistence type="evidence at protein level"/>
<keyword id="KW-0903">Direct protein sequencing</keyword>
<keyword id="KW-0479">Metal-binding</keyword>
<keyword id="KW-0496">Mitochondrion</keyword>
<keyword id="KW-0560">Oxidoreductase</keyword>
<keyword id="KW-0630">Potassium</keyword>
<keyword id="KW-0670">Pyruvate</keyword>
<keyword id="KW-1185">Reference proteome</keyword>
<keyword id="KW-0786">Thiamine pyrophosphate</keyword>
<keyword id="KW-0809">Transit peptide</keyword>
<evidence type="ECO:0000250" key="1">
    <source>
        <dbReference type="UniProtKB" id="P11177"/>
    </source>
</evidence>
<evidence type="ECO:0000269" key="2">
    <source>
    </source>
</evidence>
<evidence type="ECO:0000269" key="3">
    <source>
    </source>
</evidence>
<evidence type="ECO:0000305" key="4"/>
<evidence type="ECO:0000305" key="5">
    <source>
    </source>
</evidence>
<accession>P32473</accession>
<accession>D6VQL7</accession>
<name>ODPB_YEAST</name>
<comment type="function">
    <text evidence="5">The pyruvate dehydrogenase complex catalyzes the overall conversion of pyruvate to acetyl-CoA and CO(2).</text>
</comment>
<comment type="catalytic activity">
    <reaction evidence="5">
        <text>N(6)-[(R)-lipoyl]-L-lysyl-[protein] + pyruvate + H(+) = N(6)-[(R)-S(8)-acetyldihydrolipoyl]-L-lysyl-[protein] + CO2</text>
        <dbReference type="Rhea" id="RHEA:19189"/>
        <dbReference type="Rhea" id="RHEA-COMP:10474"/>
        <dbReference type="Rhea" id="RHEA-COMP:10478"/>
        <dbReference type="ChEBI" id="CHEBI:15361"/>
        <dbReference type="ChEBI" id="CHEBI:15378"/>
        <dbReference type="ChEBI" id="CHEBI:16526"/>
        <dbReference type="ChEBI" id="CHEBI:83099"/>
        <dbReference type="ChEBI" id="CHEBI:83111"/>
        <dbReference type="EC" id="1.2.4.1"/>
    </reaction>
    <physiologicalReaction direction="left-to-right" evidence="5">
        <dbReference type="Rhea" id="RHEA:19190"/>
    </physiologicalReaction>
</comment>
<comment type="cofactor">
    <cofactor evidence="1">
        <name>thiamine diphosphate</name>
        <dbReference type="ChEBI" id="CHEBI:58937"/>
    </cofactor>
</comment>
<comment type="subunit">
    <text>Pyruvate dehydrogenase (E1) is a tetramer of 2 alpha and 2 beta subunits. Eukaryotic pyruvate dehydrogenase (PDH) complexes are organized as a core consisting of the oligomeric dihydrolipoamide acetyl-transferase (E2), around which are arranged multiple copies of pyruvate dehydrogenase (E1), dihydrolipoamide dehydrogenase (E3) and protein X (E3BP) bound by non-covalent bonds.</text>
</comment>
<comment type="subcellular location">
    <subcellularLocation>
        <location>Mitochondrion matrix</location>
    </subcellularLocation>
</comment>
<comment type="miscellaneous">
    <text evidence="2">Present with 9970 molecules/cell in log phase SD medium.</text>
</comment>
<sequence>MFSRLPTSLARNVARRAPTSFVRPSAAAAALRFSSTKTMTVREALNSAMAEELDRDDDVFLIGEEVAQYNGAYKVSKGLLDRFGERRVVDTPITEYGFTGLAVGAALKGLKPIVEFMSFNFSMQAIDHVVNSAAKTHYMSGGTQKCQMVFRGPNGAAVGVGAQHSQDFSPWYGSIPGLKVLVPYSAEDARGLLKAAIRDPNPVVFLENELLYGESFEISEEALSPEFTLPYKAKIEREGTDISIVTYTRNVQFSLEAAEILQKKYGVSAEVINLRSIRPLDTEAIIKTVKKTNHLITVESTFPSFGVGAEIVAQVMESEAFDYLDAPIQRVTGADVPTPYAKELEDFAFPDTPTIVKAVKEVLSIE</sequence>
<gene>
    <name type="primary">PDB1</name>
    <name type="ordered locus">YBR221C</name>
    <name type="ORF">YBR1511</name>
</gene>
<protein>
    <recommendedName>
        <fullName>Pyruvate dehydrogenase E1 component subunit beta, mitochondrial</fullName>
        <ecNumber evidence="5">1.2.4.1</ecNumber>
    </recommendedName>
    <alternativeName>
        <fullName>Pyruvate dehydrogenase complex component E1 beta</fullName>
        <shortName>PDHE1-B</shortName>
    </alternativeName>
</protein>
<reference key="1">
    <citation type="journal article" date="1993" name="Proc. Natl. Acad. Sci. U.S.A.">
        <title>Characterization of PDH beta 1, the structural gene for the pyruvate dehydrogenase beta subunit from Saccharomyces cerevisiae.</title>
        <authorList>
            <person name="Miran S.G."/>
            <person name="Lawson J.E."/>
            <person name="Reed L.J."/>
        </authorList>
    </citation>
    <scope>NUCLEOTIDE SEQUENCE [GENOMIC DNA]</scope>
    <scope>PROTEIN SEQUENCE OF 34-54 AND 206-219</scope>
    <scope>FUNCTION</scope>
    <scope>CATALYTIC ACTIVITY</scope>
</reference>
<reference key="2">
    <citation type="journal article" date="1994" name="EMBO J.">
        <title>Complete DNA sequence of yeast chromosome II.</title>
        <authorList>
            <person name="Feldmann H."/>
            <person name="Aigle M."/>
            <person name="Aljinovic G."/>
            <person name="Andre B."/>
            <person name="Baclet M.C."/>
            <person name="Barthe C."/>
            <person name="Baur A."/>
            <person name="Becam A.-M."/>
            <person name="Biteau N."/>
            <person name="Boles E."/>
            <person name="Brandt T."/>
            <person name="Brendel M."/>
            <person name="Brueckner M."/>
            <person name="Bussereau F."/>
            <person name="Christiansen C."/>
            <person name="Contreras R."/>
            <person name="Crouzet M."/>
            <person name="Cziepluch C."/>
            <person name="Demolis N."/>
            <person name="Delaveau T."/>
            <person name="Doignon F."/>
            <person name="Domdey H."/>
            <person name="Duesterhus S."/>
            <person name="Dubois E."/>
            <person name="Dujon B."/>
            <person name="El Bakkoury M."/>
            <person name="Entian K.-D."/>
            <person name="Feuermann M."/>
            <person name="Fiers W."/>
            <person name="Fobo G.M."/>
            <person name="Fritz C."/>
            <person name="Gassenhuber J."/>
            <person name="Glansdorff N."/>
            <person name="Goffeau A."/>
            <person name="Grivell L.A."/>
            <person name="de Haan M."/>
            <person name="Hein C."/>
            <person name="Herbert C.J."/>
            <person name="Hollenberg C.P."/>
            <person name="Holmstroem K."/>
            <person name="Jacq C."/>
            <person name="Jacquet M."/>
            <person name="Jauniaux J.-C."/>
            <person name="Jonniaux J.-L."/>
            <person name="Kallesoee T."/>
            <person name="Kiesau P."/>
            <person name="Kirchrath L."/>
            <person name="Koetter P."/>
            <person name="Korol S."/>
            <person name="Liebl S."/>
            <person name="Logghe M."/>
            <person name="Lohan A.J.E."/>
            <person name="Louis E.J."/>
            <person name="Li Z.Y."/>
            <person name="Maat M.J."/>
            <person name="Mallet L."/>
            <person name="Mannhaupt G."/>
            <person name="Messenguy F."/>
            <person name="Miosga T."/>
            <person name="Molemans F."/>
            <person name="Mueller S."/>
            <person name="Nasr F."/>
            <person name="Obermaier B."/>
            <person name="Perea J."/>
            <person name="Pierard A."/>
            <person name="Piravandi E."/>
            <person name="Pohl F.M."/>
            <person name="Pohl T.M."/>
            <person name="Potier S."/>
            <person name="Proft M."/>
            <person name="Purnelle B."/>
            <person name="Ramezani Rad M."/>
            <person name="Rieger M."/>
            <person name="Rose M."/>
            <person name="Schaaff-Gerstenschlaeger I."/>
            <person name="Scherens B."/>
            <person name="Schwarzlose C."/>
            <person name="Skala J."/>
            <person name="Slonimski P.P."/>
            <person name="Smits P.H.M."/>
            <person name="Souciet J.-L."/>
            <person name="Steensma H.Y."/>
            <person name="Stucka R."/>
            <person name="Urrestarazu L.A."/>
            <person name="van der Aart Q.J.M."/>
            <person name="Van Dyck L."/>
            <person name="Vassarotti A."/>
            <person name="Vetter I."/>
            <person name="Vierendeels F."/>
            <person name="Vissers S."/>
            <person name="Wagner G."/>
            <person name="de Wergifosse P."/>
            <person name="Wolfe K.H."/>
            <person name="Zagulski M."/>
            <person name="Zimmermann F.K."/>
            <person name="Mewes H.-W."/>
            <person name="Kleine K."/>
        </authorList>
    </citation>
    <scope>NUCLEOTIDE SEQUENCE [LARGE SCALE GENOMIC DNA]</scope>
    <source>
        <strain>ATCC 204508 / S288c</strain>
    </source>
</reference>
<reference key="3">
    <citation type="journal article" date="2014" name="G3 (Bethesda)">
        <title>The reference genome sequence of Saccharomyces cerevisiae: Then and now.</title>
        <authorList>
            <person name="Engel S.R."/>
            <person name="Dietrich F.S."/>
            <person name="Fisk D.G."/>
            <person name="Binkley G."/>
            <person name="Balakrishnan R."/>
            <person name="Costanzo M.C."/>
            <person name="Dwight S.S."/>
            <person name="Hitz B.C."/>
            <person name="Karra K."/>
            <person name="Nash R.S."/>
            <person name="Weng S."/>
            <person name="Wong E.D."/>
            <person name="Lloyd P."/>
            <person name="Skrzypek M.S."/>
            <person name="Miyasato S.R."/>
            <person name="Simison M."/>
            <person name="Cherry J.M."/>
        </authorList>
    </citation>
    <scope>GENOME REANNOTATION</scope>
    <source>
        <strain>ATCC 204508 / S288c</strain>
    </source>
</reference>
<reference key="4">
    <citation type="journal article" date="2007" name="Genome Res.">
        <title>Approaching a complete repository of sequence-verified protein-encoding clones for Saccharomyces cerevisiae.</title>
        <authorList>
            <person name="Hu Y."/>
            <person name="Rolfs A."/>
            <person name="Bhullar B."/>
            <person name="Murthy T.V.S."/>
            <person name="Zhu C."/>
            <person name="Berger M.F."/>
            <person name="Camargo A.A."/>
            <person name="Kelley F."/>
            <person name="McCarron S."/>
            <person name="Jepson D."/>
            <person name="Richardson A."/>
            <person name="Raphael J."/>
            <person name="Moreira D."/>
            <person name="Taycher E."/>
            <person name="Zuo D."/>
            <person name="Mohr S."/>
            <person name="Kane M.F."/>
            <person name="Williamson J."/>
            <person name="Simpson A.J.G."/>
            <person name="Bulyk M.L."/>
            <person name="Harlow E."/>
            <person name="Marsischky G."/>
            <person name="Kolodner R.D."/>
            <person name="LaBaer J."/>
        </authorList>
    </citation>
    <scope>NUCLEOTIDE SEQUENCE [GENOMIC DNA]</scope>
    <source>
        <strain>ATCC 204508 / S288c</strain>
    </source>
</reference>
<reference key="5">
    <citation type="journal article" date="2003" name="Nature">
        <title>Global analysis of protein expression in yeast.</title>
        <authorList>
            <person name="Ghaemmaghami S."/>
            <person name="Huh W.-K."/>
            <person name="Bower K."/>
            <person name="Howson R.W."/>
            <person name="Belle A."/>
            <person name="Dephoure N."/>
            <person name="O'Shea E.K."/>
            <person name="Weissman J.S."/>
        </authorList>
    </citation>
    <scope>LEVEL OF PROTEIN EXPRESSION [LARGE SCALE ANALYSIS]</scope>
</reference>
<reference key="6">
    <citation type="journal article" date="2007" name="J. Proteome Res.">
        <title>Large-scale phosphorylation analysis of alpha-factor-arrested Saccharomyces cerevisiae.</title>
        <authorList>
            <person name="Li X."/>
            <person name="Gerber S.A."/>
            <person name="Rudner A.D."/>
            <person name="Beausoleil S.A."/>
            <person name="Haas W."/>
            <person name="Villen J."/>
            <person name="Elias J.E."/>
            <person name="Gygi S.P."/>
        </authorList>
    </citation>
    <scope>IDENTIFICATION BY MASS SPECTROMETRY [LARGE SCALE ANALYSIS]</scope>
    <source>
        <strain>ADR376</strain>
    </source>
</reference>
<feature type="transit peptide" description="Mitochondrion" evidence="3">
    <location>
        <begin position="1"/>
        <end position="33"/>
    </location>
</feature>
<feature type="chain" id="PRO_0000020461" description="Pyruvate dehydrogenase E1 component subunit beta, mitochondrial">
    <location>
        <begin position="34"/>
        <end position="366"/>
    </location>
</feature>
<feature type="binding site" evidence="1">
    <location>
        <position position="95"/>
    </location>
    <ligand>
        <name>thiamine diphosphate</name>
        <dbReference type="ChEBI" id="CHEBI:58937"/>
        <note>ligand shared with alpha subunit</note>
    </ligand>
</feature>
<feature type="binding site" evidence="1">
    <location>
        <position position="196"/>
    </location>
    <ligand>
        <name>K(+)</name>
        <dbReference type="ChEBI" id="CHEBI:29103"/>
        <note>structural</note>
    </ligand>
</feature>
<feature type="binding site" evidence="1">
    <location>
        <position position="197"/>
    </location>
    <ligand>
        <name>K(+)</name>
        <dbReference type="ChEBI" id="CHEBI:29103"/>
        <note>structural</note>
    </ligand>
</feature>
<feature type="binding site" evidence="1">
    <location>
        <position position="199"/>
    </location>
    <ligand>
        <name>K(+)</name>
        <dbReference type="ChEBI" id="CHEBI:29103"/>
        <note>structural</note>
    </ligand>
</feature>
<feature type="binding site" evidence="1">
    <location>
        <position position="201"/>
    </location>
    <ligand>
        <name>K(+)</name>
        <dbReference type="ChEBI" id="CHEBI:29103"/>
        <note>structural</note>
    </ligand>
</feature>
<feature type="sequence conflict" description="In Ref. 1; AAA34583." evidence="4" ref="1">
    <original>V</original>
    <variation>L</variation>
    <location>
        <position position="160"/>
    </location>
</feature>
<organism>
    <name type="scientific">Saccharomyces cerevisiae (strain ATCC 204508 / S288c)</name>
    <name type="common">Baker's yeast</name>
    <dbReference type="NCBI Taxonomy" id="559292"/>
    <lineage>
        <taxon>Eukaryota</taxon>
        <taxon>Fungi</taxon>
        <taxon>Dikarya</taxon>
        <taxon>Ascomycota</taxon>
        <taxon>Saccharomycotina</taxon>
        <taxon>Saccharomycetes</taxon>
        <taxon>Saccharomycetales</taxon>
        <taxon>Saccharomycetaceae</taxon>
        <taxon>Saccharomyces</taxon>
    </lineage>
</organism>
<dbReference type="EC" id="1.2.4.1" evidence="5"/>
<dbReference type="EMBL" id="M98476">
    <property type="protein sequence ID" value="AAA34583.1"/>
    <property type="molecule type" value="Genomic_DNA"/>
</dbReference>
<dbReference type="EMBL" id="Z36090">
    <property type="protein sequence ID" value="CAA85184.1"/>
    <property type="molecule type" value="Genomic_DNA"/>
</dbReference>
<dbReference type="EMBL" id="AY692982">
    <property type="protein sequence ID" value="AAT93001.1"/>
    <property type="molecule type" value="Genomic_DNA"/>
</dbReference>
<dbReference type="EMBL" id="BK006936">
    <property type="protein sequence ID" value="DAA07337.1"/>
    <property type="molecule type" value="Genomic_DNA"/>
</dbReference>
<dbReference type="PIR" id="S46097">
    <property type="entry name" value="S46097"/>
</dbReference>
<dbReference type="RefSeq" id="NP_009780.1">
    <property type="nucleotide sequence ID" value="NM_001178569.1"/>
</dbReference>
<dbReference type="SMR" id="P32473"/>
<dbReference type="BioGRID" id="32918">
    <property type="interactions" value="414"/>
</dbReference>
<dbReference type="ComplexPortal" id="CPX-3207">
    <property type="entry name" value="Mitochondrial pyruvate dehydrogenase complex"/>
</dbReference>
<dbReference type="DIP" id="DIP-1499N"/>
<dbReference type="FunCoup" id="P32473">
    <property type="interactions" value="1013"/>
</dbReference>
<dbReference type="IntAct" id="P32473">
    <property type="interactions" value="64"/>
</dbReference>
<dbReference type="MINT" id="P32473"/>
<dbReference type="STRING" id="4932.YBR221C"/>
<dbReference type="iPTMnet" id="P32473"/>
<dbReference type="PaxDb" id="4932-YBR221C"/>
<dbReference type="PeptideAtlas" id="P32473"/>
<dbReference type="EnsemblFungi" id="YBR221C_mRNA">
    <property type="protein sequence ID" value="YBR221C"/>
    <property type="gene ID" value="YBR221C"/>
</dbReference>
<dbReference type="GeneID" id="852522"/>
<dbReference type="KEGG" id="sce:YBR221C"/>
<dbReference type="AGR" id="SGD:S000000425"/>
<dbReference type="SGD" id="S000000425">
    <property type="gene designation" value="PDB1"/>
</dbReference>
<dbReference type="VEuPathDB" id="FungiDB:YBR221C"/>
<dbReference type="eggNOG" id="KOG0524">
    <property type="taxonomic scope" value="Eukaryota"/>
</dbReference>
<dbReference type="GeneTree" id="ENSGT00940000155146"/>
<dbReference type="HOGENOM" id="CLU_012907_1_1_1"/>
<dbReference type="InParanoid" id="P32473"/>
<dbReference type="OMA" id="WYANCPG"/>
<dbReference type="OrthoDB" id="10266385at2759"/>
<dbReference type="BioCyc" id="YEAST:YBR221C-MONOMER"/>
<dbReference type="Reactome" id="R-SCE-9837999">
    <property type="pathway name" value="Mitochondrial protein degradation"/>
</dbReference>
<dbReference type="Reactome" id="R-SCE-9861559">
    <property type="pathway name" value="PDH complex synthesizes acetyl-CoA from PYR"/>
</dbReference>
<dbReference type="BioGRID-ORCS" id="852522">
    <property type="hits" value="6 hits in 10 CRISPR screens"/>
</dbReference>
<dbReference type="PRO" id="PR:P32473"/>
<dbReference type="Proteomes" id="UP000002311">
    <property type="component" value="Chromosome II"/>
</dbReference>
<dbReference type="RNAct" id="P32473">
    <property type="molecule type" value="protein"/>
</dbReference>
<dbReference type="GO" id="GO:0042645">
    <property type="term" value="C:mitochondrial nucleoid"/>
    <property type="evidence" value="ECO:0000314"/>
    <property type="project" value="SGD"/>
</dbReference>
<dbReference type="GO" id="GO:0005739">
    <property type="term" value="C:mitochondrion"/>
    <property type="evidence" value="ECO:0000314"/>
    <property type="project" value="ComplexPortal"/>
</dbReference>
<dbReference type="GO" id="GO:0045254">
    <property type="term" value="C:pyruvate dehydrogenase complex"/>
    <property type="evidence" value="ECO:0000314"/>
    <property type="project" value="SGD"/>
</dbReference>
<dbReference type="GO" id="GO:0046872">
    <property type="term" value="F:metal ion binding"/>
    <property type="evidence" value="ECO:0007669"/>
    <property type="project" value="UniProtKB-KW"/>
</dbReference>
<dbReference type="GO" id="GO:0004739">
    <property type="term" value="F:pyruvate dehydrogenase (acetyl-transferring) activity"/>
    <property type="evidence" value="ECO:0000315"/>
    <property type="project" value="SGD"/>
</dbReference>
<dbReference type="GO" id="GO:0006086">
    <property type="term" value="P:pyruvate decarboxylation to acetyl-CoA"/>
    <property type="evidence" value="ECO:0000314"/>
    <property type="project" value="SGD"/>
</dbReference>
<dbReference type="CDD" id="cd07036">
    <property type="entry name" value="TPP_PYR_E1-PDHc-beta_like"/>
    <property type="match status" value="1"/>
</dbReference>
<dbReference type="FunFam" id="3.40.50.920:FF:000001">
    <property type="entry name" value="Pyruvate dehydrogenase E1 beta subunit"/>
    <property type="match status" value="1"/>
</dbReference>
<dbReference type="FunFam" id="3.40.50.970:FF:000006">
    <property type="entry name" value="Pyruvate dehydrogenase E1 component subunit beta"/>
    <property type="match status" value="1"/>
</dbReference>
<dbReference type="Gene3D" id="3.40.50.920">
    <property type="match status" value="1"/>
</dbReference>
<dbReference type="Gene3D" id="3.40.50.970">
    <property type="match status" value="1"/>
</dbReference>
<dbReference type="InterPro" id="IPR027110">
    <property type="entry name" value="PDHB_mito-type"/>
</dbReference>
<dbReference type="InterPro" id="IPR029061">
    <property type="entry name" value="THDP-binding"/>
</dbReference>
<dbReference type="InterPro" id="IPR009014">
    <property type="entry name" value="Transketo_C/PFOR_II"/>
</dbReference>
<dbReference type="InterPro" id="IPR005475">
    <property type="entry name" value="Transketolase-like_Pyr-bd"/>
</dbReference>
<dbReference type="InterPro" id="IPR033248">
    <property type="entry name" value="Transketolase_C"/>
</dbReference>
<dbReference type="NCBIfam" id="NF006667">
    <property type="entry name" value="PRK09212.1"/>
    <property type="match status" value="1"/>
</dbReference>
<dbReference type="NCBIfam" id="NF008854">
    <property type="entry name" value="PRK11892.1"/>
    <property type="match status" value="1"/>
</dbReference>
<dbReference type="PANTHER" id="PTHR11624">
    <property type="entry name" value="DEHYDROGENASE RELATED"/>
    <property type="match status" value="1"/>
</dbReference>
<dbReference type="PANTHER" id="PTHR11624:SF96">
    <property type="entry name" value="PYRUVATE DEHYDROGENASE E1 COMPONENT SUBUNIT BETA, MITOCHONDRIAL"/>
    <property type="match status" value="1"/>
</dbReference>
<dbReference type="Pfam" id="PF02779">
    <property type="entry name" value="Transket_pyr"/>
    <property type="match status" value="1"/>
</dbReference>
<dbReference type="Pfam" id="PF02780">
    <property type="entry name" value="Transketolase_C"/>
    <property type="match status" value="1"/>
</dbReference>
<dbReference type="SMART" id="SM00861">
    <property type="entry name" value="Transket_pyr"/>
    <property type="match status" value="1"/>
</dbReference>
<dbReference type="SUPFAM" id="SSF52518">
    <property type="entry name" value="Thiamin diphosphate-binding fold (THDP-binding)"/>
    <property type="match status" value="1"/>
</dbReference>
<dbReference type="SUPFAM" id="SSF52922">
    <property type="entry name" value="TK C-terminal domain-like"/>
    <property type="match status" value="1"/>
</dbReference>